<keyword id="KW-0004">4Fe-4S</keyword>
<keyword id="KW-0067">ATP-binding</keyword>
<keyword id="KW-0227">DNA damage</keyword>
<keyword id="KW-0234">DNA repair</keyword>
<keyword id="KW-0238">DNA-binding</keyword>
<keyword id="KW-0269">Exonuclease</keyword>
<keyword id="KW-0347">Helicase</keyword>
<keyword id="KW-0378">Hydrolase</keyword>
<keyword id="KW-0408">Iron</keyword>
<keyword id="KW-0411">Iron-sulfur</keyword>
<keyword id="KW-0479">Metal-binding</keyword>
<keyword id="KW-0540">Nuclease</keyword>
<keyword id="KW-0547">Nucleotide-binding</keyword>
<comment type="function">
    <text evidence="1">The heterodimer acts as both an ATP-dependent DNA helicase and an ATP-dependent, dual-direction single-stranded exonuclease. Recognizes the chi site generating a DNA molecule suitable for the initiation of homologous recombination. The AddB subunit has 5' -&gt; 3' nuclease activity but not helicase activity.</text>
</comment>
<comment type="cofactor">
    <cofactor evidence="1">
        <name>Mg(2+)</name>
        <dbReference type="ChEBI" id="CHEBI:18420"/>
    </cofactor>
</comment>
<comment type="cofactor">
    <cofactor evidence="1">
        <name>[4Fe-4S] cluster</name>
        <dbReference type="ChEBI" id="CHEBI:49883"/>
    </cofactor>
    <text evidence="1">Binds 1 [4Fe-4S] cluster.</text>
</comment>
<comment type="subunit">
    <text evidence="1">Heterodimer of AddA and AddB.</text>
</comment>
<comment type="miscellaneous">
    <text evidence="1">Despite having conserved helicase domains, this subunit does not have helicase activity.</text>
</comment>
<comment type="similarity">
    <text evidence="1">Belongs to the helicase family. AddB/RexB type 1 subfamily.</text>
</comment>
<organism>
    <name type="scientific">Bacillus thuringiensis (strain Al Hakam)</name>
    <dbReference type="NCBI Taxonomy" id="412694"/>
    <lineage>
        <taxon>Bacteria</taxon>
        <taxon>Bacillati</taxon>
        <taxon>Bacillota</taxon>
        <taxon>Bacilli</taxon>
        <taxon>Bacillales</taxon>
        <taxon>Bacillaceae</taxon>
        <taxon>Bacillus</taxon>
        <taxon>Bacillus cereus group</taxon>
    </lineage>
</organism>
<feature type="chain" id="PRO_0000379164" description="ATP-dependent helicase/deoxyribonuclease subunit B">
    <location>
        <begin position="1"/>
        <end position="1171"/>
    </location>
</feature>
<feature type="domain" description="UvrD-like helicase ATP-binding" evidence="1">
    <location>
        <begin position="1"/>
        <end position="343"/>
    </location>
</feature>
<feature type="domain" description="UvrD-like helicase C-terminal" evidence="1">
    <location>
        <begin position="281"/>
        <end position="587"/>
    </location>
</feature>
<feature type="binding site" evidence="1">
    <location>
        <begin position="8"/>
        <end position="15"/>
    </location>
    <ligand>
        <name>ATP</name>
        <dbReference type="ChEBI" id="CHEBI:30616"/>
    </ligand>
</feature>
<feature type="binding site" evidence="1">
    <location>
        <position position="805"/>
    </location>
    <ligand>
        <name>[4Fe-4S] cluster</name>
        <dbReference type="ChEBI" id="CHEBI:49883"/>
    </ligand>
</feature>
<feature type="binding site" evidence="1">
    <location>
        <position position="1129"/>
    </location>
    <ligand>
        <name>[4Fe-4S] cluster</name>
        <dbReference type="ChEBI" id="CHEBI:49883"/>
    </ligand>
</feature>
<feature type="binding site" evidence="1">
    <location>
        <position position="1132"/>
    </location>
    <ligand>
        <name>[4Fe-4S] cluster</name>
        <dbReference type="ChEBI" id="CHEBI:49883"/>
    </ligand>
</feature>
<feature type="binding site" evidence="1">
    <location>
        <position position="1138"/>
    </location>
    <ligand>
        <name>[4Fe-4S] cluster</name>
        <dbReference type="ChEBI" id="CHEBI:49883"/>
    </ligand>
</feature>
<gene>
    <name evidence="1" type="primary">addB</name>
    <name type="ordered locus">BALH_1005</name>
</gene>
<reference key="1">
    <citation type="journal article" date="2007" name="J. Bacteriol.">
        <title>The complete genome sequence of Bacillus thuringiensis Al Hakam.</title>
        <authorList>
            <person name="Challacombe J.F."/>
            <person name="Altherr M.R."/>
            <person name="Xie G."/>
            <person name="Bhotika S.S."/>
            <person name="Brown N."/>
            <person name="Bruce D."/>
            <person name="Campbell C.S."/>
            <person name="Campbell M.L."/>
            <person name="Chen J."/>
            <person name="Chertkov O."/>
            <person name="Cleland C."/>
            <person name="Dimitrijevic M."/>
            <person name="Doggett N.A."/>
            <person name="Fawcett J.J."/>
            <person name="Glavina T."/>
            <person name="Goodwin L.A."/>
            <person name="Green L.D."/>
            <person name="Han C.S."/>
            <person name="Hill K.K."/>
            <person name="Hitchcock P."/>
            <person name="Jackson P.J."/>
            <person name="Keim P."/>
            <person name="Kewalramani A.R."/>
            <person name="Longmire J."/>
            <person name="Lucas S."/>
            <person name="Malfatti S."/>
            <person name="Martinez D."/>
            <person name="McMurry K."/>
            <person name="Meincke L.J."/>
            <person name="Misra M."/>
            <person name="Moseman B.L."/>
            <person name="Mundt M."/>
            <person name="Munk A.C."/>
            <person name="Okinaka R.T."/>
            <person name="Parson-Quintana B."/>
            <person name="Reilly L.P."/>
            <person name="Richardson P."/>
            <person name="Robinson D.L."/>
            <person name="Saunders E."/>
            <person name="Tapia R."/>
            <person name="Tesmer J.G."/>
            <person name="Thayer N."/>
            <person name="Thompson L.S."/>
            <person name="Tice H."/>
            <person name="Ticknor L.O."/>
            <person name="Wills P.L."/>
            <person name="Gilna P."/>
            <person name="Brettin T.S."/>
        </authorList>
    </citation>
    <scope>NUCLEOTIDE SEQUENCE [LARGE SCALE GENOMIC DNA]</scope>
    <source>
        <strain>Al Hakam</strain>
    </source>
</reference>
<sequence>MSLRFVIGRAGSGKSTLCLHEVQEELKQRPRGETILYLVPEQMTFQTQQALIGSEDVRGSIRAQVFSFSRLAWKVLQEVGGASRLHIDEAGVHMLLRKIVESRKDGLSVFQKAAEQNGFFEHLGSMIAEFKRYNVTPSNVYEMWQQLDAHSSSAEQKLLANKVYDLQLLYDDFERALIGKYLDSEDYLQLLVENLPQSEYVKGAEVYIDGFHSFSPQELEIVRQLMICGARVTITLTIDEKTLAQPVNELDLFYETTLTYEKIKQVAREEKIEIEKTIPLMEQPRFHSPALAHLEMHYEARPNEKFHGEASVTIHTAANLRAEVEGVAREIRRLVAEENYRYRDIAVLLRNGESYYDVMRTLFTDYNIPHFIDEKRPMSHHPLVECIRSALEIISGNWRYDAVFRCVKTELLYPLDVRKETMREEMDEFENYCLAYGVQGKRWTSEDPWMYRRYRSLDDTNGMITDSEREMEEKINRLRDVVRTPVIRMQKRLKRAGTVMQMCEAVYLFLEELDVPKKLEALRIRAEESGDFLFATDHEQVWEEVMSLLDTFVEMLGEEKMSLSMFTDVMSTGLEALQFANIPPSLDQVLIANIDRSRLSNVKATFVIGVNEGVIPAAPMDEGMLSDEERDVLSAAGIELAPTTRQTLLEEQFVMYQMVTRATEKLYISCPLADEEGKTLLASSFIKKIKRMFPNVKDTFITNDVNDLSRSEQISYVATPEVTLSYVMQQLQTWKRYGFEGNLDFWWDVYNFYVTSDEWKQKSSRVLSSLFYRNRAQKLSTAVSRDLYGDKIKGSVSRMELFNRCAYAHFAQHGLSLRERDIFKLDAPDIGELFHAALKRIADRLLRENRTWADLSIKECEHLSTVVIEEIAPLLQRQILLSSNRHFYLKQKLQQIIFRTSIILREHAKSSGFVPVDLEVPFGMGGTGSLPPMEFSLPNGVKMEVVGRIDRVDKAEDENGTFLRIIDYKSSSKSLDLTEVYYGLALQMLTYLDVVTSNAQTWMKKGHAASPAGVLYFHIHNPIVEVKGDASEAEIEKEILKKFKMKGLVLGDADVVRLMDNKLSTGSSDIISAGLKKDGSFSARSSIASEQEFNVLQKYVHHTFKNIGKDITEGVIDIAPYKKGNKAACTFCNFKSVCQFDESLEDNQFRTLKDMKDSEAMEKIREEVGGE</sequence>
<protein>
    <recommendedName>
        <fullName evidence="1">ATP-dependent helicase/deoxyribonuclease subunit B</fullName>
        <ecNumber evidence="1">3.1.-.-</ecNumber>
    </recommendedName>
    <alternativeName>
        <fullName evidence="1">ATP-dependent helicase/nuclease subunit AddB</fullName>
    </alternativeName>
</protein>
<dbReference type="EC" id="3.1.-.-" evidence="1"/>
<dbReference type="EMBL" id="CP000485">
    <property type="protein sequence ID" value="ABK84369.1"/>
    <property type="molecule type" value="Genomic_DNA"/>
</dbReference>
<dbReference type="RefSeq" id="WP_000058569.1">
    <property type="nucleotide sequence ID" value="NC_008600.1"/>
</dbReference>
<dbReference type="SMR" id="A0RAX6"/>
<dbReference type="KEGG" id="btl:BALH_1005"/>
<dbReference type="HOGENOM" id="CLU_007838_0_0_9"/>
<dbReference type="GO" id="GO:0051539">
    <property type="term" value="F:4 iron, 4 sulfur cluster binding"/>
    <property type="evidence" value="ECO:0007669"/>
    <property type="project" value="UniProtKB-KW"/>
</dbReference>
<dbReference type="GO" id="GO:0008409">
    <property type="term" value="F:5'-3' exonuclease activity"/>
    <property type="evidence" value="ECO:0007669"/>
    <property type="project" value="UniProtKB-UniRule"/>
</dbReference>
<dbReference type="GO" id="GO:0005524">
    <property type="term" value="F:ATP binding"/>
    <property type="evidence" value="ECO:0007669"/>
    <property type="project" value="UniProtKB-UniRule"/>
</dbReference>
<dbReference type="GO" id="GO:0003690">
    <property type="term" value="F:double-stranded DNA binding"/>
    <property type="evidence" value="ECO:0007669"/>
    <property type="project" value="UniProtKB-UniRule"/>
</dbReference>
<dbReference type="GO" id="GO:0004386">
    <property type="term" value="F:helicase activity"/>
    <property type="evidence" value="ECO:0007669"/>
    <property type="project" value="UniProtKB-KW"/>
</dbReference>
<dbReference type="GO" id="GO:0046872">
    <property type="term" value="F:metal ion binding"/>
    <property type="evidence" value="ECO:0007669"/>
    <property type="project" value="UniProtKB-KW"/>
</dbReference>
<dbReference type="GO" id="GO:0000724">
    <property type="term" value="P:double-strand break repair via homologous recombination"/>
    <property type="evidence" value="ECO:0007669"/>
    <property type="project" value="UniProtKB-UniRule"/>
</dbReference>
<dbReference type="FunFam" id="3.40.50.300:FF:001679">
    <property type="entry name" value="ATP-dependent helicase/deoxyribonuclease subunit B"/>
    <property type="match status" value="1"/>
</dbReference>
<dbReference type="FunFam" id="3.40.50.300:FF:001704">
    <property type="entry name" value="ATP-dependent helicase/deoxyribonuclease subunit B"/>
    <property type="match status" value="1"/>
</dbReference>
<dbReference type="FunFam" id="3.40.50.300:FF:001705">
    <property type="entry name" value="ATP-dependent helicase/deoxyribonuclease subunit B"/>
    <property type="match status" value="1"/>
</dbReference>
<dbReference type="FunFam" id="3.40.50.300:FF:001739">
    <property type="entry name" value="ATP-dependent helicase/deoxyribonuclease subunit B"/>
    <property type="match status" value="1"/>
</dbReference>
<dbReference type="FunFam" id="3.90.320.10:FF:000006">
    <property type="entry name" value="ATP-dependent helicase/deoxyribonuclease subunit B"/>
    <property type="match status" value="1"/>
</dbReference>
<dbReference type="Gene3D" id="3.90.320.10">
    <property type="match status" value="1"/>
</dbReference>
<dbReference type="Gene3D" id="6.10.140.1030">
    <property type="match status" value="1"/>
</dbReference>
<dbReference type="Gene3D" id="3.40.50.300">
    <property type="entry name" value="P-loop containing nucleotide triphosphate hydrolases"/>
    <property type="match status" value="4"/>
</dbReference>
<dbReference type="HAMAP" id="MF_01452">
    <property type="entry name" value="AddB_type1"/>
    <property type="match status" value="1"/>
</dbReference>
<dbReference type="InterPro" id="IPR049035">
    <property type="entry name" value="ADDB_N"/>
</dbReference>
<dbReference type="InterPro" id="IPR014140">
    <property type="entry name" value="DNA_helicase_suAddB"/>
</dbReference>
<dbReference type="InterPro" id="IPR014017">
    <property type="entry name" value="DNA_helicase_UvrD-like_C"/>
</dbReference>
<dbReference type="InterPro" id="IPR027417">
    <property type="entry name" value="P-loop_NTPase"/>
</dbReference>
<dbReference type="InterPro" id="IPR011604">
    <property type="entry name" value="PDDEXK-like_dom_sf"/>
</dbReference>
<dbReference type="InterPro" id="IPR038726">
    <property type="entry name" value="PDDEXK_AddAB-type"/>
</dbReference>
<dbReference type="NCBIfam" id="TIGR02773">
    <property type="entry name" value="addB_Gpos"/>
    <property type="match status" value="1"/>
</dbReference>
<dbReference type="PANTHER" id="PTHR30591">
    <property type="entry name" value="RECBCD ENZYME SUBUNIT RECC"/>
    <property type="match status" value="1"/>
</dbReference>
<dbReference type="PANTHER" id="PTHR30591:SF1">
    <property type="entry name" value="RECBCD ENZYME SUBUNIT RECC"/>
    <property type="match status" value="1"/>
</dbReference>
<dbReference type="Pfam" id="PF21445">
    <property type="entry name" value="ADDB_N"/>
    <property type="match status" value="1"/>
</dbReference>
<dbReference type="Pfam" id="PF12705">
    <property type="entry name" value="PDDEXK_1"/>
    <property type="match status" value="1"/>
</dbReference>
<dbReference type="Pfam" id="PF13361">
    <property type="entry name" value="UvrD_C"/>
    <property type="match status" value="1"/>
</dbReference>
<dbReference type="SUPFAM" id="SSF52540">
    <property type="entry name" value="P-loop containing nucleoside triphosphate hydrolases"/>
    <property type="match status" value="2"/>
</dbReference>
<dbReference type="PROSITE" id="PS51198">
    <property type="entry name" value="UVRD_HELICASE_ATP_BIND"/>
    <property type="match status" value="1"/>
</dbReference>
<dbReference type="PROSITE" id="PS51217">
    <property type="entry name" value="UVRD_HELICASE_CTER"/>
    <property type="match status" value="1"/>
</dbReference>
<name>ADDB_BACAH</name>
<proteinExistence type="inferred from homology"/>
<accession>A0RAX6</accession>
<evidence type="ECO:0000255" key="1">
    <source>
        <dbReference type="HAMAP-Rule" id="MF_01452"/>
    </source>
</evidence>